<organism>
    <name type="scientific">Arabidopsis thaliana</name>
    <name type="common">Mouse-ear cress</name>
    <dbReference type="NCBI Taxonomy" id="3702"/>
    <lineage>
        <taxon>Eukaryota</taxon>
        <taxon>Viridiplantae</taxon>
        <taxon>Streptophyta</taxon>
        <taxon>Embryophyta</taxon>
        <taxon>Tracheophyta</taxon>
        <taxon>Spermatophyta</taxon>
        <taxon>Magnoliopsida</taxon>
        <taxon>eudicotyledons</taxon>
        <taxon>Gunneridae</taxon>
        <taxon>Pentapetalae</taxon>
        <taxon>rosids</taxon>
        <taxon>malvids</taxon>
        <taxon>Brassicales</taxon>
        <taxon>Brassicaceae</taxon>
        <taxon>Camelineae</taxon>
        <taxon>Arabidopsis</taxon>
    </lineage>
</organism>
<reference key="1">
    <citation type="journal article" date="1999" name="Nature">
        <title>Sequence and analysis of chromosome 2 of the plant Arabidopsis thaliana.</title>
        <authorList>
            <person name="Lin X."/>
            <person name="Kaul S."/>
            <person name="Rounsley S.D."/>
            <person name="Shea T.P."/>
            <person name="Benito M.-I."/>
            <person name="Town C.D."/>
            <person name="Fujii C.Y."/>
            <person name="Mason T.M."/>
            <person name="Bowman C.L."/>
            <person name="Barnstead M.E."/>
            <person name="Feldblyum T.V."/>
            <person name="Buell C.R."/>
            <person name="Ketchum K.A."/>
            <person name="Lee J.J."/>
            <person name="Ronning C.M."/>
            <person name="Koo H.L."/>
            <person name="Moffat K.S."/>
            <person name="Cronin L.A."/>
            <person name="Shen M."/>
            <person name="Pai G."/>
            <person name="Van Aken S."/>
            <person name="Umayam L."/>
            <person name="Tallon L.J."/>
            <person name="Gill J.E."/>
            <person name="Adams M.D."/>
            <person name="Carrera A.J."/>
            <person name="Creasy T.H."/>
            <person name="Goodman H.M."/>
            <person name="Somerville C.R."/>
            <person name="Copenhaver G.P."/>
            <person name="Preuss D."/>
            <person name="Nierman W.C."/>
            <person name="White O."/>
            <person name="Eisen J.A."/>
            <person name="Salzberg S.L."/>
            <person name="Fraser C.M."/>
            <person name="Venter J.C."/>
        </authorList>
    </citation>
    <scope>NUCLEOTIDE SEQUENCE [LARGE SCALE GENOMIC DNA]</scope>
    <source>
        <strain>cv. Columbia</strain>
    </source>
</reference>
<reference key="2">
    <citation type="journal article" date="2017" name="Plant J.">
        <title>Araport11: a complete reannotation of the Arabidopsis thaliana reference genome.</title>
        <authorList>
            <person name="Cheng C.Y."/>
            <person name="Krishnakumar V."/>
            <person name="Chan A.P."/>
            <person name="Thibaud-Nissen F."/>
            <person name="Schobel S."/>
            <person name="Town C.D."/>
        </authorList>
    </citation>
    <scope>GENOME REANNOTATION</scope>
    <source>
        <strain>cv. Columbia</strain>
    </source>
</reference>
<reference key="3">
    <citation type="journal article" date="2003" name="Science">
        <title>Empirical analysis of transcriptional activity in the Arabidopsis genome.</title>
        <authorList>
            <person name="Yamada K."/>
            <person name="Lim J."/>
            <person name="Dale J.M."/>
            <person name="Chen H."/>
            <person name="Shinn P."/>
            <person name="Palm C.J."/>
            <person name="Southwick A.M."/>
            <person name="Wu H.C."/>
            <person name="Kim C.J."/>
            <person name="Nguyen M."/>
            <person name="Pham P.K."/>
            <person name="Cheuk R.F."/>
            <person name="Karlin-Newmann G."/>
            <person name="Liu S.X."/>
            <person name="Lam B."/>
            <person name="Sakano H."/>
            <person name="Wu T."/>
            <person name="Yu G."/>
            <person name="Miranda M."/>
            <person name="Quach H.L."/>
            <person name="Tripp M."/>
            <person name="Chang C.H."/>
            <person name="Lee J.M."/>
            <person name="Toriumi M.J."/>
            <person name="Chan M.M."/>
            <person name="Tang C.C."/>
            <person name="Onodera C.S."/>
            <person name="Deng J.M."/>
            <person name="Akiyama K."/>
            <person name="Ansari Y."/>
            <person name="Arakawa T."/>
            <person name="Banh J."/>
            <person name="Banno F."/>
            <person name="Bowser L."/>
            <person name="Brooks S.Y."/>
            <person name="Carninci P."/>
            <person name="Chao Q."/>
            <person name="Choy N."/>
            <person name="Enju A."/>
            <person name="Goldsmith A.D."/>
            <person name="Gurjal M."/>
            <person name="Hansen N.F."/>
            <person name="Hayashizaki Y."/>
            <person name="Johnson-Hopson C."/>
            <person name="Hsuan V.W."/>
            <person name="Iida K."/>
            <person name="Karnes M."/>
            <person name="Khan S."/>
            <person name="Koesema E."/>
            <person name="Ishida J."/>
            <person name="Jiang P.X."/>
            <person name="Jones T."/>
            <person name="Kawai J."/>
            <person name="Kamiya A."/>
            <person name="Meyers C."/>
            <person name="Nakajima M."/>
            <person name="Narusaka M."/>
            <person name="Seki M."/>
            <person name="Sakurai T."/>
            <person name="Satou M."/>
            <person name="Tamse R."/>
            <person name="Vaysberg M."/>
            <person name="Wallender E.K."/>
            <person name="Wong C."/>
            <person name="Yamamura Y."/>
            <person name="Yuan S."/>
            <person name="Shinozaki K."/>
            <person name="Davis R.W."/>
            <person name="Theologis A."/>
            <person name="Ecker J.R."/>
        </authorList>
    </citation>
    <scope>NUCLEOTIDE SEQUENCE [LARGE SCALE MRNA] OF 1-914</scope>
    <source>
        <strain>cv. Columbia</strain>
    </source>
</reference>
<reference key="4">
    <citation type="journal article" date="2008" name="Plant Biotechnol.">
        <title>Arabidopsis VIP6/ELF8, the homolog of CTR9 component of the transcriptional complex PAF1, is essential for plant development.</title>
        <authorList>
            <person name="Shiraya T."/>
            <person name="Sato S."/>
            <person name="Kato T."/>
            <person name="Tabata S."/>
            <person name="Iwasaki T."/>
        </authorList>
    </citation>
    <scope>IDENTIFICATION</scope>
</reference>
<reference key="5">
    <citation type="journal article" date="2003" name="Genetics">
        <title>Genetic analysis of early flowering mutants in Arabidopsis defines a class of pleiotropic developmental regulator required for expression of the flowering-time switch flowering locus C.</title>
        <authorList>
            <person name="Zhang H."/>
            <person name="Ransom C."/>
            <person name="Ludwig P."/>
            <person name="van Nocker S."/>
        </authorList>
    </citation>
    <scope>DISRUPTION PHENOTYPE</scope>
</reference>
<reference key="6">
    <citation type="journal article" date="2004" name="Genes Dev.">
        <title>PAF1-complex-mediated histone methylation of FLOWERING LOCUS C chromatin is required for the vernalization-responsive, winter-annual habit in Arabidopsis.</title>
        <authorList>
            <person name="He Y."/>
            <person name="Doyle M.R."/>
            <person name="Amasino R.M."/>
        </authorList>
    </citation>
    <scope>FUNCTION</scope>
</reference>
<reference key="7">
    <citation type="journal article" date="2004" name="Plant Cell">
        <title>A mechanism related to the yeast transcriptional regulator Paf1c is required for expression of the Arabidopsis FLC/MAF MADS box gene family.</title>
        <authorList>
            <person name="Oh S."/>
            <person name="Zhang H."/>
            <person name="Ludwig P."/>
            <person name="van Nocker S."/>
        </authorList>
    </citation>
    <scope>FUNCTION</scope>
    <scope>INTERACTION WITH VIP3 AND VIP4</scope>
</reference>
<reference key="8">
    <citation type="journal article" date="2010" name="Plant Physiol.">
        <title>PLANT HOMOLOGOUS TO PARAFIBROMIN is a component of the PAF1 complex and assists in regulating expression of genes within H3K27ME3-enriched chromatin.</title>
        <authorList>
            <person name="Park S."/>
            <person name="Oh S."/>
            <person name="Ek-Ramos J."/>
            <person name="van Nocker S."/>
        </authorList>
    </citation>
    <scope>IDENTIFICATION IN THE PAF1 COMPLEX</scope>
    <scope>FUNCTION</scope>
    <scope>SUBCELLULAR LOCATION</scope>
</reference>
<reference key="9">
    <citation type="journal article" date="2011" name="PLoS ONE">
        <title>Identification of the Arabidopsis REDUCED DORMANCY 2 gene uncovers a role for the polymerase associated factor 1 complex in seed dormancy.</title>
        <authorList>
            <person name="Liu Y."/>
            <person name="Geyer R."/>
            <person name="van Zanten M."/>
            <person name="Carles A."/>
            <person name="Li Y."/>
            <person name="Horold A."/>
            <person name="van Nocker S."/>
            <person name="Soppe W.J."/>
        </authorList>
    </citation>
    <scope>FUNCTION</scope>
    <scope>DISRUPTION PHENOTYPE</scope>
</reference>
<reference key="10">
    <citation type="journal article" date="2012" name="Mol. Cell. Proteomics">
        <title>Comparative large-scale characterisation of plant vs. mammal proteins reveals similar and idiosyncratic N-alpha acetylation features.</title>
        <authorList>
            <person name="Bienvenut W.V."/>
            <person name="Sumpton D."/>
            <person name="Martinez A."/>
            <person name="Lilla S."/>
            <person name="Espagne C."/>
            <person name="Meinnel T."/>
            <person name="Giglione C."/>
        </authorList>
    </citation>
    <scope>ACETYLATION [LARGE SCALE ANALYSIS] AT ALA-2</scope>
    <scope>CLEAVAGE OF INITIATOR METHIONINE [LARGE SCALE ANALYSIS]</scope>
    <scope>IDENTIFICATION BY MASS SPECTROMETRY [LARGE SCALE ANALYSIS]</scope>
</reference>
<gene>
    <name evidence="8" type="primary">VIP6</name>
    <name evidence="9" type="synonym">ELF8</name>
    <name evidence="11" type="ordered locus">At2g06210</name>
</gene>
<dbReference type="EMBL" id="AC006413">
    <property type="protein sequence ID" value="AAM15237.1"/>
    <property type="status" value="ALT_SEQ"/>
    <property type="molecule type" value="Genomic_DNA"/>
</dbReference>
<dbReference type="EMBL" id="CP002685">
    <property type="protein sequence ID" value="AEC06005.2"/>
    <property type="molecule type" value="Genomic_DNA"/>
</dbReference>
<dbReference type="EMBL" id="AY070455">
    <property type="protein sequence ID" value="AAL49858.1"/>
    <property type="status" value="ALT_FRAME"/>
    <property type="molecule type" value="mRNA"/>
</dbReference>
<dbReference type="EMBL" id="BR000721">
    <property type="protein sequence ID" value="FAA00428.1"/>
    <property type="molecule type" value="mRNA"/>
</dbReference>
<dbReference type="PIR" id="B84476">
    <property type="entry name" value="B84476"/>
</dbReference>
<dbReference type="RefSeq" id="NP_178674.7">
    <property type="nucleotide sequence ID" value="NM_126631.7"/>
</dbReference>
<dbReference type="SMR" id="B5X0I6"/>
<dbReference type="FunCoup" id="B5X0I6">
    <property type="interactions" value="3727"/>
</dbReference>
<dbReference type="IntAct" id="B5X0I6">
    <property type="interactions" value="7"/>
</dbReference>
<dbReference type="STRING" id="3702.B5X0I6"/>
<dbReference type="iPTMnet" id="B5X0I6"/>
<dbReference type="PaxDb" id="3702-AT2G06210.1"/>
<dbReference type="ProteomicsDB" id="234184"/>
<dbReference type="GeneID" id="815177"/>
<dbReference type="KEGG" id="ath:AT2G06210"/>
<dbReference type="Araport" id="AT2G06210"/>
<dbReference type="TAIR" id="AT2G06210"/>
<dbReference type="eggNOG" id="KOG2002">
    <property type="taxonomic scope" value="Eukaryota"/>
</dbReference>
<dbReference type="HOGENOM" id="CLU_284636_0_0_1"/>
<dbReference type="InParanoid" id="B5X0I6"/>
<dbReference type="PhylomeDB" id="B5X0I6"/>
<dbReference type="PRO" id="PR:B5X0I6"/>
<dbReference type="Proteomes" id="UP000006548">
    <property type="component" value="Chromosome 2"/>
</dbReference>
<dbReference type="GO" id="GO:0016593">
    <property type="term" value="C:Cdc73/Paf1 complex"/>
    <property type="evidence" value="ECO:0000314"/>
    <property type="project" value="UniProtKB"/>
</dbReference>
<dbReference type="GO" id="GO:0005634">
    <property type="term" value="C:nucleus"/>
    <property type="evidence" value="ECO:0000314"/>
    <property type="project" value="UniProtKB"/>
</dbReference>
<dbReference type="GO" id="GO:0000993">
    <property type="term" value="F:RNA polymerase II complex binding"/>
    <property type="evidence" value="ECO:0000318"/>
    <property type="project" value="GO_Central"/>
</dbReference>
<dbReference type="GO" id="GO:0009908">
    <property type="term" value="P:flower development"/>
    <property type="evidence" value="ECO:0007669"/>
    <property type="project" value="UniProtKB-KW"/>
</dbReference>
<dbReference type="GO" id="GO:0009910">
    <property type="term" value="P:negative regulation of flower development"/>
    <property type="evidence" value="ECO:0000315"/>
    <property type="project" value="TAIR"/>
</dbReference>
<dbReference type="GO" id="GO:0045893">
    <property type="term" value="P:positive regulation of DNA-templated transcription"/>
    <property type="evidence" value="ECO:0000315"/>
    <property type="project" value="TAIR"/>
</dbReference>
<dbReference type="GO" id="GO:0006368">
    <property type="term" value="P:transcription elongation by RNA polymerase II"/>
    <property type="evidence" value="ECO:0000318"/>
    <property type="project" value="GO_Central"/>
</dbReference>
<dbReference type="FunFam" id="1.25.40.10:FF:000328">
    <property type="entry name" value="protein CTR9 homolog"/>
    <property type="match status" value="1"/>
</dbReference>
<dbReference type="FunFam" id="1.25.40.10:FF:000628">
    <property type="entry name" value="protein CTR9 homolog"/>
    <property type="match status" value="1"/>
</dbReference>
<dbReference type="FunFam" id="1.25.40.10:FF:000383">
    <property type="entry name" value="Rna polymerase-associated protein ctr9"/>
    <property type="match status" value="1"/>
</dbReference>
<dbReference type="Gene3D" id="1.25.40.10">
    <property type="entry name" value="Tetratricopeptide repeat domain"/>
    <property type="match status" value="4"/>
</dbReference>
<dbReference type="InterPro" id="IPR031101">
    <property type="entry name" value="Ctr9"/>
</dbReference>
<dbReference type="InterPro" id="IPR011990">
    <property type="entry name" value="TPR-like_helical_dom_sf"/>
</dbReference>
<dbReference type="InterPro" id="IPR019734">
    <property type="entry name" value="TPR_rpt"/>
</dbReference>
<dbReference type="PANTHER" id="PTHR14027">
    <property type="entry name" value="RNA POLYMERASE-ASSOCIATED PROTEIN CTR9"/>
    <property type="match status" value="1"/>
</dbReference>
<dbReference type="PANTHER" id="PTHR14027:SF2">
    <property type="entry name" value="RNA POLYMERASE-ASSOCIATED PROTEIN CTR9 HOMOLOG"/>
    <property type="match status" value="1"/>
</dbReference>
<dbReference type="Pfam" id="PF13432">
    <property type="entry name" value="TPR_16"/>
    <property type="match status" value="2"/>
</dbReference>
<dbReference type="Pfam" id="PF13181">
    <property type="entry name" value="TPR_8"/>
    <property type="match status" value="3"/>
</dbReference>
<dbReference type="SMART" id="SM00028">
    <property type="entry name" value="TPR"/>
    <property type="match status" value="13"/>
</dbReference>
<dbReference type="SUPFAM" id="SSF48452">
    <property type="entry name" value="TPR-like"/>
    <property type="match status" value="3"/>
</dbReference>
<dbReference type="PROSITE" id="PS50005">
    <property type="entry name" value="TPR"/>
    <property type="match status" value="11"/>
</dbReference>
<dbReference type="PROSITE" id="PS50293">
    <property type="entry name" value="TPR_REGION"/>
    <property type="match status" value="1"/>
</dbReference>
<proteinExistence type="evidence at protein level"/>
<accession>B5X0I6</accession>
<accession>Q8S8H1</accession>
<accession>Q8VYL2</accession>
<comment type="function">
    <text evidence="4 5 6 7">Component of the PAF1 complex (PAF1C) which is involved in histone modifications such as methylation on histone H3 'Lys-4' (H3K4me3) (PubMed:20363855). Involved in regulation of flowering time. Required for the expression of the MADS box genes and flowering repressors FLC, AGL27/FLM and AGL31/MAF2 (PubMed:15472079, PubMed:15520273). Required for histone H3 trimethylation on 'Lys-4' H3K4me3 at the FLC and AGL27/FLM loci (PubMed:15520273). Involved in the control of seed dormancy and germination (PubMed:21799800).</text>
</comment>
<comment type="subunit">
    <text evidence="4 6">Component of the nuclear PAF1 complex (PAF1C), which consists of VIP2/ELF7/PAF1, VIP3/SKI8/WDR61, VIP4/LEO1, VIP5/RTF1, VIP6/ELF8/CTR9 and CDC73 (PubMed:20363855). Interacts with VIP3 and VIP4 (PubMed:15472079).</text>
</comment>
<comment type="subcellular location">
    <subcellularLocation>
        <location evidence="6">Nucleus</location>
    </subcellularLocation>
</comment>
<comment type="tissue specificity">
    <text evidence="5">Expressed in roots, leaves and shoot apex.</text>
</comment>
<comment type="disruption phenotype">
    <text evidence="3 7">Early flowering, reduced plant size and defects in floral morphology in whorls 1-3, but fully fertile flowers (PubMed:12750345). Reduced seed dormancy and increased germination rate of freshly harvested seeds (PubMed:21799800).</text>
</comment>
<comment type="sequence caution" evidence="10">
    <conflict type="frameshift">
        <sequence resource="EMBL-CDS" id="AAL49858"/>
    </conflict>
</comment>
<comment type="sequence caution" evidence="10">
    <conflict type="erroneous gene model prediction">
        <sequence resource="EMBL-CDS" id="AAM15237"/>
    </conflict>
</comment>
<evidence type="ECO:0000255" key="1"/>
<evidence type="ECO:0000256" key="2">
    <source>
        <dbReference type="SAM" id="MobiDB-lite"/>
    </source>
</evidence>
<evidence type="ECO:0000269" key="3">
    <source>
    </source>
</evidence>
<evidence type="ECO:0000269" key="4">
    <source>
    </source>
</evidence>
<evidence type="ECO:0000269" key="5">
    <source>
    </source>
</evidence>
<evidence type="ECO:0000269" key="6">
    <source>
    </source>
</evidence>
<evidence type="ECO:0000269" key="7">
    <source>
    </source>
</evidence>
<evidence type="ECO:0000303" key="8">
    <source>
    </source>
</evidence>
<evidence type="ECO:0000303" key="9">
    <source>
    </source>
</evidence>
<evidence type="ECO:0000305" key="10"/>
<evidence type="ECO:0000312" key="11">
    <source>
        <dbReference type="Araport" id="AT2G06210"/>
    </source>
</evidence>
<evidence type="ECO:0007744" key="12">
    <source>
    </source>
</evidence>
<sequence>MASVYIPVQNSEEEVRVVLDQLPRDASDILDILKAEQAPLDLWLIIAREYFKQGKIEQFRQILEEGSSSDIDEYYADVKYERIAILNALGAYYSYLGKTETKNREKEEQFISATRYYNKASRIDMHEPSTWVGKGQLLLAKGEIDNALQAFKIVLDTAPDNVPALLGQASVEFNRGRFSESLQLYKRALQVFPGCPAAVRLGIGLCRYKLGQLDKARQAFDRVLQLDPDNVEALVALGIMDLQANDSIGMRKGMDRMQQAFEIYPYCASALNYLANHFFFTGQHFLVEQLTETALAVTTHGPTKSHSFYNLARSYHSKGDFEKAGMYYMAAIKETNNNPHEFVFPYFGLGQVQLKLGELKGSVFNFEKVLEVYPDNCETLKALGHLYTQLGQNEKALEYMRKATKLDPRDAQAFVGLGELLISSDTGAALDAFKMARTLMKKGGQEVPIEVLNDIGALHFEREEFESALENFKEALGDGIWISFLDEKENLEQTGVSVLGYKDTGIFHRLIESGHSVDVPWNKVTTLFNLARLLEQIHKTEAATFMYRLILFKYPGYIDAYLRLAASAKAQNNLPLAIELVNEALKVDDKNPNALSLLGELELKNDDWVKAKETFRAANDATDGKDSYAILSLGNWNYFAAMRNEKRNPKLEATHLEKAKELYTKVLTQHNSNMYAANGSGIVLAEKGQFDIAKDVFTQVQEAASGSVFLQMPDVWVNLAHVYFAQGNFALTVKMYQNCLRKFFYNTDSQILLYLARTHYEAEQWQECKKTLLRAIHLTPSNYTFRFDLGAVMQKSSSSTLQKKKRTADEVRSTVAEAENAVRVFTQLSAASDLHVHGFDSKKIQTHVQYCSHLLEAAKVHREAAEQEELQNRQRLEVARQAALAEEARRKAEEQRKYQLEKRKQEEELRRLKQEEEKFQRIKEQWKSSTPGSNKRKDRVEDDDGESKPSERRRKKGGKRRKKDKSSRARHYEDDEEEAATMDDHNEVEDEDANTNYNREDEMTTQEAEEPVDDDAHDLLAAAGLEDPDVDDDEVPTSGVRRRRALSSSDEEGELMEESHPNSSPQKEKEESNGEAGDPNMEEEEEEEEAN</sequence>
<feature type="initiator methionine" description="Removed" evidence="12">
    <location>
        <position position="1"/>
    </location>
</feature>
<feature type="chain" id="PRO_0000432762" description="Protein CTR9 homolog">
    <location>
        <begin position="2"/>
        <end position="1091"/>
    </location>
</feature>
<feature type="repeat" description="TPR 1" evidence="1">
    <location>
        <begin position="90"/>
        <end position="127"/>
    </location>
</feature>
<feature type="repeat" description="TPR 2" evidence="1">
    <location>
        <begin position="128"/>
        <end position="161"/>
    </location>
</feature>
<feature type="repeat" description="TPR 3" evidence="1">
    <location>
        <begin position="163"/>
        <end position="195"/>
    </location>
</feature>
<feature type="repeat" description="TPR 4" evidence="1">
    <location>
        <begin position="197"/>
        <end position="230"/>
    </location>
</feature>
<feature type="repeat" description="TPR 5" evidence="1">
    <location>
        <begin position="232"/>
        <end position="267"/>
    </location>
</feature>
<feature type="repeat" description="TPR 6" evidence="1">
    <location>
        <begin position="305"/>
        <end position="338"/>
    </location>
</feature>
<feature type="repeat" description="TPR 7" evidence="1">
    <location>
        <begin position="343"/>
        <end position="376"/>
    </location>
</feature>
<feature type="repeat" description="TPR 8" evidence="1">
    <location>
        <begin position="377"/>
        <end position="410"/>
    </location>
</feature>
<feature type="repeat" description="TPR 9" evidence="1">
    <location>
        <begin position="412"/>
        <end position="443"/>
    </location>
</feature>
<feature type="repeat" description="TPR 10" evidence="1">
    <location>
        <begin position="449"/>
        <end position="482"/>
    </location>
</feature>
<feature type="repeat" description="TPR 11" evidence="1">
    <location>
        <begin position="558"/>
        <end position="591"/>
    </location>
</feature>
<feature type="repeat" description="TPR 12" evidence="1">
    <location>
        <begin position="593"/>
        <end position="625"/>
    </location>
</feature>
<feature type="repeat" description="TPR 13" evidence="1">
    <location>
        <begin position="640"/>
        <end position="673"/>
    </location>
</feature>
<feature type="repeat" description="TPR 14" evidence="1">
    <location>
        <begin position="674"/>
        <end position="707"/>
    </location>
</feature>
<feature type="repeat" description="TPR 15" evidence="1">
    <location>
        <begin position="713"/>
        <end position="746"/>
    </location>
</feature>
<feature type="repeat" description="TPR 16" evidence="1">
    <location>
        <begin position="749"/>
        <end position="782"/>
    </location>
</feature>
<feature type="region of interest" description="Disordered" evidence="2">
    <location>
        <begin position="919"/>
        <end position="1091"/>
    </location>
</feature>
<feature type="compositionally biased region" description="Basic residues" evidence="2">
    <location>
        <begin position="951"/>
        <end position="965"/>
    </location>
</feature>
<feature type="compositionally biased region" description="Acidic residues" evidence="2">
    <location>
        <begin position="974"/>
        <end position="993"/>
    </location>
</feature>
<feature type="compositionally biased region" description="Acidic residues" evidence="2">
    <location>
        <begin position="1003"/>
        <end position="1016"/>
    </location>
</feature>
<feature type="compositionally biased region" description="Acidic residues" evidence="2">
    <location>
        <begin position="1026"/>
        <end position="1035"/>
    </location>
</feature>
<feature type="compositionally biased region" description="Acidic residues" evidence="2">
    <location>
        <begin position="1080"/>
        <end position="1091"/>
    </location>
</feature>
<feature type="modified residue" description="N-acetylalanine" evidence="12">
    <location>
        <position position="2"/>
    </location>
</feature>
<protein>
    <recommendedName>
        <fullName evidence="10">Protein CTR9 homolog</fullName>
    </recommendedName>
    <alternativeName>
        <fullName evidence="9">Protein EARLY FLOWERING 8</fullName>
    </alternativeName>
    <alternativeName>
        <fullName evidence="8">Protein VERNALIZATION INDEPENDENCE 6</fullName>
    </alternativeName>
</protein>
<name>VIP6_ARATH</name>
<keyword id="KW-0007">Acetylation</keyword>
<keyword id="KW-0287">Flowering</keyword>
<keyword id="KW-0539">Nucleus</keyword>
<keyword id="KW-1185">Reference proteome</keyword>
<keyword id="KW-0677">Repeat</keyword>
<keyword id="KW-0802">TPR repeat</keyword>
<keyword id="KW-0804">Transcription</keyword>
<keyword id="KW-0805">Transcription regulation</keyword>